<protein>
    <recommendedName>
        <fullName>Collagen alpha-1(IV) chain</fullName>
    </recommendedName>
</protein>
<organism>
    <name type="scientific">Caenorhabditis elegans</name>
    <dbReference type="NCBI Taxonomy" id="6239"/>
    <lineage>
        <taxon>Eukaryota</taxon>
        <taxon>Metazoa</taxon>
        <taxon>Ecdysozoa</taxon>
        <taxon>Nematoda</taxon>
        <taxon>Chromadorea</taxon>
        <taxon>Rhabditida</taxon>
        <taxon>Rhabditina</taxon>
        <taxon>Rhabditomorpha</taxon>
        <taxon>Rhabditoidea</taxon>
        <taxon>Rhabditidae</taxon>
        <taxon>Peloderinae</taxon>
        <taxon>Caenorhabditis</taxon>
    </lineage>
</organism>
<gene>
    <name evidence="10" type="primary">emb-9</name>
    <name evidence="10" type="synonym">clb-2</name>
    <name evidence="10" type="ORF">K04H4.1</name>
</gene>
<sequence length="1759" mass="170987">MSRLSLLGLTAAVVLLSSFCQDRIHVDAAAACKGCAPPCVCPGTKGERGNPGFGGEPGHPGAPGQDGPEGAPGAPGMFGAEGDFGDMGSKGARGDRGLPGSPGHPGLQGLDGLPGLKGEEGIPGCNGTDGFPGMPGLAGPPGQSGQNGNPGRPGLSGPPGEGGVNSQGRKGVKGESGRSGVPGLPGNSGYPGLKGAKGDPGPYGLPGFPGVSGLKGRMGVRTSGVKGEKGLPGPPGPPGQPGSYPWASKPIEMEVLQGPVGPAGVKGEKGRDGPVGPPGMLGLDGPPGYPGLKGQKGDLGDAGQRGKRGKDGVPGNYGEKGSQGEQGLGGTPGYPGTKGGAGEPGYPGRPGFEGDCGPEGPLGEGTGEAGPHGAQGFDGVQGGKGLPGHDGLPGPVGPRGPVGAPGAPGQPGIDGMPGYTEKGDRGEDGYPGFAGEPGLPGEPGDCGYPGEDGLPGYDIQGPPGLDGQSGRDGFPGIPGDIGDPGYSGEKGFPGTGVNKVGPPGMTGLPGEPGMPGRIGVDGYPGPPGNNGERGEDCGYCPDGVPGNAGDPGFPGMNGYPGPPGPNGDHGDCGMPGAPGKPGSAGSDGLSGSPGLPGIPGYPGMKGEAGEIVGPMENPAGIPGLKGDHGLPGLPGRPGSDGLPGYPGGPGQNGFPGLQGEPGLAGIDGKRGRQGSLGIPGLQGPPGDSFPGQPGTPGYKGERGADGLPGLPGAQGPRGIPAPLRIVNQVAGQPGVDGMPGLPGDRGADGLPGLPGPVGPDGYPGTPGERGMDGLPGFPGLHGEPGMRGQQGEVGFNGIDGDCGEPGLDGYPGAPGAPGAPGETGFGFPGQVGYPGPNGDAGAAGLPGPDGYPGRDGLPGTPGYPGEAGMNGQDGAPGQPGSRGESGLVGIDGKKGRDGTPGTRGQDGGPGYSGEAGAPGQNGMDGYPGAPGDQGYPGSPGQDGYPGPSGIPGEDGLVGFPGLRGEHGDNGLPGLEGECGEEGSRGLDGVPGYPGEHGTDGLPGLPGADGQPGFVGEAGEPGTPGYRGQPGEPGNLAYPGQPGDVGYPGPDGPPGLPGQDGLPGLNGERGDNGDSYPGNPGLSGQPGDAGYDGLDGVPGPPGYPGITGMPGLKGESGLPGLPGRQGNDGIPGQPGLEGECGEDGFPGSPGQPGYPGQQGREGEKGYPGIPGENGLPGLRGQDGQPGLKGENGLDGQPGYPGSAGQLGTPGDVGYPGAPGENGDNGNQGRDGQPGLRGESGQPGQPGLPGRDGQPGPVGPPGDDGYPGAPGQDIYGPPGQAGQDGYPGLDGLPGAPGLNGEPGSPGQYGMPGLPGGPGESGLPGYPGERGLPGLDGKRGHDGLPGAPGVPGVEGVPGLEGDCGEDGYPGAPGAPGSNGYPGERGLPGVPGQQGRSGDNGYPGAPGQPGIKGPRGDDGFPGRDGLDGLPGRPGREGLPGPMAMAVRNPPGQPGENGYPGEKGYPGLPGDNGLSGPPGKAGYPGAPGTDGYPGPPGLSGMPGHGGDQGFQGAAGRTGNPGLPGTPGYPGSPGGWAPSRGFTFAKHSQTTAVPQCPPGASQLWEGYSLLYVQGNGRASGQDLGQPGSCLSKFNTMPFMFCNMNSVCHVSSRNDYSFWLSTDEPMTPMMNPVTGTAIRPYISRCAVCEVPTQIIAVHSQDTSVPQCPQGWSGMWTGYSFVMHTAAGAEGTGQSLQSPGSCLEEFRAVPFIECHGRGTCNYYATNHGFWLSIVDQDKQFRKPMSQTLKAGGLKDRVSRCQVCLKNR</sequence>
<keyword id="KW-0025">Alternative splicing</keyword>
<keyword id="KW-0084">Basement membrane</keyword>
<keyword id="KW-0176">Collagen</keyword>
<keyword id="KW-1015">Disulfide bond</keyword>
<keyword id="KW-0272">Extracellular matrix</keyword>
<keyword id="KW-0379">Hydroxylation</keyword>
<keyword id="KW-1185">Reference proteome</keyword>
<keyword id="KW-0677">Repeat</keyword>
<keyword id="KW-0964">Secreted</keyword>
<keyword id="KW-0732">Signal</keyword>
<name>CO4A1_CAEEL</name>
<reference key="1">
    <citation type="journal article" date="1991" name="Nature">
        <title>Embryonic lethality caused by mutations in basement membrane collagen of C. elegans.</title>
        <authorList>
            <person name="Guo X."/>
            <person name="Johnson J.J."/>
            <person name="Kramer J.M."/>
        </authorList>
    </citation>
    <scope>NUCLEOTIDE SEQUENCE [GENOMIC DNA] (ISOFORM A)</scope>
    <scope>MUTAGENESIS OF GLY-403 AND GLY-409</scope>
    <source>
        <strain>Bristol N2</strain>
    </source>
</reference>
<reference key="2">
    <citation type="journal article" date="1994" name="Nature">
        <title>2.2 Mb of contiguous nucleotide sequence from chromosome III of C. elegans.</title>
        <authorList>
            <person name="Wilson R."/>
            <person name="Ainscough R."/>
            <person name="Anderson K."/>
            <person name="Baynes C."/>
            <person name="Berks M."/>
            <person name="Bonfield J."/>
            <person name="Burton J."/>
            <person name="Connell M."/>
            <person name="Copsey T."/>
            <person name="Cooper J."/>
            <person name="Coulson A."/>
            <person name="Craxton M."/>
            <person name="Dear S."/>
            <person name="Du Z."/>
            <person name="Durbin R."/>
            <person name="Favello A."/>
            <person name="Fraser A."/>
            <person name="Fulton L."/>
            <person name="Gardner A."/>
            <person name="Green P."/>
            <person name="Hawkins T."/>
            <person name="Hillier L."/>
            <person name="Jier M."/>
            <person name="Johnston L."/>
            <person name="Jones M."/>
            <person name="Kershaw J."/>
            <person name="Kirsten J."/>
            <person name="Laisster N."/>
            <person name="Latreille P."/>
            <person name="Lightning J."/>
            <person name="Lloyd C."/>
            <person name="Mortimore B."/>
            <person name="O'Callaghan M."/>
            <person name="Parsons J."/>
            <person name="Percy C."/>
            <person name="Rifken L."/>
            <person name="Roopra A."/>
            <person name="Saunders D."/>
            <person name="Shownkeen R."/>
            <person name="Sims M."/>
            <person name="Smaldon N."/>
            <person name="Smith A."/>
            <person name="Smith M."/>
            <person name="Sonnhammer E."/>
            <person name="Staden R."/>
            <person name="Sulston J."/>
            <person name="Thierry-Mieg J."/>
            <person name="Thomas K."/>
            <person name="Vaudin M."/>
            <person name="Vaughan K."/>
            <person name="Waterston R."/>
            <person name="Watson A."/>
            <person name="Weinstock L."/>
            <person name="Wilkinson-Sproat J."/>
            <person name="Wohldman P."/>
        </authorList>
    </citation>
    <scope>NUCLEOTIDE SEQUENCE [LARGE SCALE GENOMIC DNA]</scope>
    <source>
        <strain>Bristol N2</strain>
    </source>
</reference>
<reference key="3">
    <citation type="journal article" date="1998" name="Science">
        <title>Genome sequence of the nematode C. elegans: a platform for investigating biology.</title>
        <authorList>
            <consortium name="The C. elegans sequencing consortium"/>
        </authorList>
    </citation>
    <scope>NUCLEOTIDE SEQUENCE [LARGE SCALE GENOMIC DNA]</scope>
    <source>
        <strain>Bristol N2</strain>
    </source>
</reference>
<reference key="4">
    <citation type="journal article" date="1989" name="J. Biol. Chem.">
        <title>The two Caenorhabditis elegans basement membrane (type IV) collagen genes are located on separate chromosomes.</title>
        <authorList>
            <person name="Guo X."/>
            <person name="Kramer J.M."/>
        </authorList>
    </citation>
    <scope>NUCLEOTIDE SEQUENCE [GENOMIC DNA] OF 1447-1759 (ISOFORMS A/B)</scope>
    <source>
        <strain>Bristol N2</strain>
    </source>
</reference>
<reference key="5">
    <citation type="journal article" date="2014" name="J. Neurosci.">
        <title>Perlecan antagonizes collagen IV and ADAMTS9/GON-1 in restricting the growth of presynaptic boutons.</title>
        <authorList>
            <person name="Qin J."/>
            <person name="Liang J."/>
            <person name="Ding M."/>
        </authorList>
    </citation>
    <scope>FUNCTION</scope>
    <scope>MUTAGENESIS OF GLY-213 AND GLY-258</scope>
</reference>
<reference key="6">
    <citation type="journal article" date="2016" name="PLoS Genet.">
        <title>The C. elegans discoidin domain receptor DDR-2 modulates the Met-like RTK-JNK signaling pathway in axon regeneration.</title>
        <authorList>
            <person name="Hisamoto N."/>
            <person name="Nagamori Y."/>
            <person name="Shimizu T."/>
            <person name="Pastuhov S.I."/>
            <person name="Matsumoto K."/>
        </authorList>
    </citation>
    <scope>FUNCTION</scope>
    <scope>DISRUPTION PHENOTYPE</scope>
</reference>
<reference key="7">
    <citation type="journal article" date="2018" name="Genetics">
        <title>Genetic Suppression of Basement Membrane Defects in Caenorhabditis elegans by Gain of Function in Extracellular Matrix and Cell-Matrix Attachment Genes.</title>
        <authorList>
            <person name="Gotenstein J.R."/>
            <person name="Koo C.C."/>
            <person name="Ho T.W."/>
            <person name="Chisholm A.D."/>
        </authorList>
    </citation>
    <scope>MUTAGENESIS OF PRO-141 AND GLY-213</scope>
</reference>
<proteinExistence type="evidence at protein level"/>
<comment type="function">
    <text evidence="6 7 9">Collagen type IV is specific for basement membranes (Probable). Required to restrict presynaptic growth at the neuromuscular junctions (NMJ) in late larval stage and in adult motor neurons (PubMed:25080592). May play a role in axon regeneration in embryos following injury in D-type motor neurons (PubMed:27984580).</text>
</comment>
<comment type="subunit">
    <text>Trimers of two alpha 1(IV) and one alpha 2(IV) chain. Type IV collagen forms a mesh-like network linked through intermolecular interactions between 7S domains and between NC1 domains.</text>
</comment>
<comment type="subcellular location">
    <subcellularLocation>
        <location>Secreted</location>
        <location>Extracellular space</location>
        <location>Extracellular matrix</location>
        <location>Basement membrane</location>
    </subcellularLocation>
</comment>
<comment type="alternative products">
    <event type="alternative splicing"/>
    <isoform>
        <id>P17139-1</id>
        <name>a</name>
        <sequence type="displayed"/>
    </isoform>
    <isoform>
        <id>P17139-2</id>
        <name>b</name>
        <sequence type="described" ref="VSP_011573"/>
    </isoform>
</comment>
<comment type="domain">
    <text>Alpha chains of type IV collagen have a non-collagenous domain (NC1) at their C-terminus, frequent interruptions of the G-X-Y repeats in the long central triple-helical domain (which may cause flexibility in the triple helix), and a short N-terminal triple-helical 7S domain.</text>
</comment>
<comment type="PTM">
    <text>Prolines at the third position of the tripeptide repeating unit (G-X-Y) are hydroxylated in some or all of the chains.</text>
</comment>
<comment type="PTM">
    <text>Type IV collagens contain numerous cysteine residues which are involved in inter- and intramolecular disulfide bonding. 12 of these, located in the NC1 domain, are conserved in all known type IV collagens.</text>
</comment>
<comment type="PTM">
    <text evidence="1">The trimeric structure of the NC1 domains is stabilized by covalent bonds between Lys and Met residues.</text>
</comment>
<comment type="disruption phenotype">
    <text evidence="7">At 20 degrees Celsius, there is reduced axon regeneration following injury in D-type motor neurons in temperature-sensitive mutant embryos.</text>
</comment>
<comment type="similarity">
    <text evidence="3">Belongs to the type IV collagen family.</text>
</comment>
<evidence type="ECO:0000250" key="1"/>
<evidence type="ECO:0000255" key="2"/>
<evidence type="ECO:0000255" key="3">
    <source>
        <dbReference type="PROSITE-ProRule" id="PRU00736"/>
    </source>
</evidence>
<evidence type="ECO:0000256" key="4">
    <source>
        <dbReference type="SAM" id="MobiDB-lite"/>
    </source>
</evidence>
<evidence type="ECO:0000269" key="5">
    <source>
    </source>
</evidence>
<evidence type="ECO:0000269" key="6">
    <source>
    </source>
</evidence>
<evidence type="ECO:0000269" key="7">
    <source>
    </source>
</evidence>
<evidence type="ECO:0000269" key="8">
    <source>
    </source>
</evidence>
<evidence type="ECO:0000305" key="9"/>
<evidence type="ECO:0000312" key="10">
    <source>
        <dbReference type="WormBase" id="K04H4.1a"/>
    </source>
</evidence>
<accession>P17139</accession>
<accession>Q6LAD0</accession>
<dbReference type="EMBL" id="X56979">
    <property type="protein sequence ID" value="CAA40299.1"/>
    <property type="molecule type" value="Genomic_DNA"/>
</dbReference>
<dbReference type="EMBL" id="BX284603">
    <property type="protein sequence ID" value="CAA81584.5"/>
    <property type="molecule type" value="Genomic_DNA"/>
</dbReference>
<dbReference type="EMBL" id="BX284603">
    <property type="protein sequence ID" value="CAE52901.2"/>
    <property type="molecule type" value="Genomic_DNA"/>
</dbReference>
<dbReference type="EMBL" id="J05067">
    <property type="protein sequence ID" value="AAB59179.1"/>
    <property type="molecule type" value="Genomic_DNA"/>
</dbReference>
<dbReference type="PIR" id="S40991">
    <property type="entry name" value="S40991"/>
</dbReference>
<dbReference type="RefSeq" id="NP_001022662.2">
    <molecule id="P17139-1"/>
    <property type="nucleotide sequence ID" value="NM_001027491.7"/>
</dbReference>
<dbReference type="RefSeq" id="NP_001022663.1">
    <molecule id="P17139-2"/>
    <property type="nucleotide sequence ID" value="NM_001027492.6"/>
</dbReference>
<dbReference type="SMR" id="P17139"/>
<dbReference type="BioGRID" id="41512">
    <property type="interactions" value="6"/>
</dbReference>
<dbReference type="FunCoup" id="P17139">
    <property type="interactions" value="5"/>
</dbReference>
<dbReference type="IntAct" id="P17139">
    <property type="interactions" value="7"/>
</dbReference>
<dbReference type="STRING" id="6239.K04H4.1a.1"/>
<dbReference type="PaxDb" id="6239-K04H4.1a"/>
<dbReference type="PeptideAtlas" id="P17139"/>
<dbReference type="EnsemblMetazoa" id="K04H4.1a.1">
    <molecule id="P17139-1"/>
    <property type="protein sequence ID" value="K04H4.1a.1"/>
    <property type="gene ID" value="WBGene00001263"/>
</dbReference>
<dbReference type="EnsemblMetazoa" id="K04H4.1b.1">
    <molecule id="P17139-2"/>
    <property type="protein sequence ID" value="K04H4.1b.1"/>
    <property type="gene ID" value="WBGene00001263"/>
</dbReference>
<dbReference type="GeneID" id="176314"/>
<dbReference type="KEGG" id="cel:CELE_K04H4.1"/>
<dbReference type="UCSC" id="K04H4.1b">
    <molecule id="P17139-1"/>
    <property type="organism name" value="c. elegans"/>
</dbReference>
<dbReference type="AGR" id="WB:WBGene00001263"/>
<dbReference type="CTD" id="176314"/>
<dbReference type="WormBase" id="K04H4.1a">
    <molecule id="P17139-1"/>
    <property type="protein sequence ID" value="CE48054"/>
    <property type="gene ID" value="WBGene00001263"/>
    <property type="gene designation" value="emb-9"/>
</dbReference>
<dbReference type="WormBase" id="K04H4.1b">
    <molecule id="P17139-2"/>
    <property type="protein sequence ID" value="CE36390"/>
    <property type="gene ID" value="WBGene00001263"/>
    <property type="gene designation" value="emb-9"/>
</dbReference>
<dbReference type="eggNOG" id="KOG3544">
    <property type="taxonomic scope" value="Eukaryota"/>
</dbReference>
<dbReference type="GeneTree" id="ENSGT00940000153991"/>
<dbReference type="InParanoid" id="P17139"/>
<dbReference type="OMA" id="CEAPTRV"/>
<dbReference type="OrthoDB" id="10071882at2759"/>
<dbReference type="PhylomeDB" id="P17139"/>
<dbReference type="Reactome" id="R-CEL-1442490">
    <property type="pathway name" value="Collagen degradation"/>
</dbReference>
<dbReference type="Reactome" id="R-CEL-1650814">
    <property type="pathway name" value="Collagen biosynthesis and modifying enzymes"/>
</dbReference>
<dbReference type="Reactome" id="R-CEL-216083">
    <property type="pathway name" value="Integrin cell surface interactions"/>
</dbReference>
<dbReference type="Reactome" id="R-CEL-8948216">
    <property type="pathway name" value="Collagen chain trimerization"/>
</dbReference>
<dbReference type="SignaLink" id="P17139"/>
<dbReference type="PRO" id="PR:P17139"/>
<dbReference type="Proteomes" id="UP000001940">
    <property type="component" value="Chromosome III"/>
</dbReference>
<dbReference type="Bgee" id="WBGene00001263">
    <property type="expression patterns" value="Expressed in larva and 4 other cell types or tissues"/>
</dbReference>
<dbReference type="GO" id="GO:0005604">
    <property type="term" value="C:basement membrane"/>
    <property type="evidence" value="ECO:0000314"/>
    <property type="project" value="WormBase"/>
</dbReference>
<dbReference type="GO" id="GO:0005581">
    <property type="term" value="C:collagen trimer"/>
    <property type="evidence" value="ECO:0007669"/>
    <property type="project" value="UniProtKB-KW"/>
</dbReference>
<dbReference type="GO" id="GO:0005615">
    <property type="term" value="C:extracellular space"/>
    <property type="evidence" value="ECO:0000318"/>
    <property type="project" value="GO_Central"/>
</dbReference>
<dbReference type="GO" id="GO:0005201">
    <property type="term" value="F:extracellular matrix structural constituent"/>
    <property type="evidence" value="ECO:0000304"/>
    <property type="project" value="WormBase"/>
</dbReference>
<dbReference type="GO" id="GO:0030020">
    <property type="term" value="F:extracellular matrix structural constituent conferring tensile strength"/>
    <property type="evidence" value="ECO:0000318"/>
    <property type="project" value="GO_Central"/>
</dbReference>
<dbReference type="GO" id="GO:0009792">
    <property type="term" value="P:embryo development ending in birth or egg hatching"/>
    <property type="evidence" value="ECO:0000315"/>
    <property type="project" value="WormBase"/>
</dbReference>
<dbReference type="GO" id="GO:0030198">
    <property type="term" value="P:extracellular matrix organization"/>
    <property type="evidence" value="ECO:0000315"/>
    <property type="project" value="WormBase"/>
</dbReference>
<dbReference type="GO" id="GO:0007517">
    <property type="term" value="P:muscle organ development"/>
    <property type="evidence" value="ECO:0000315"/>
    <property type="project" value="WormBase"/>
</dbReference>
<dbReference type="GO" id="GO:0002119">
    <property type="term" value="P:nematode larval development"/>
    <property type="evidence" value="ECO:0000315"/>
    <property type="project" value="WormBase"/>
</dbReference>
<dbReference type="GO" id="GO:0048680">
    <property type="term" value="P:positive regulation of axon regeneration"/>
    <property type="evidence" value="ECO:0000315"/>
    <property type="project" value="UniProtKB"/>
</dbReference>
<dbReference type="GO" id="GO:0050714">
    <property type="term" value="P:positive regulation of protein secretion"/>
    <property type="evidence" value="ECO:0000315"/>
    <property type="project" value="WormBase"/>
</dbReference>
<dbReference type="GO" id="GO:1904014">
    <property type="term" value="P:response to serotonin"/>
    <property type="evidence" value="ECO:0000315"/>
    <property type="project" value="UniProtKB"/>
</dbReference>
<dbReference type="FunFam" id="2.170.240.10:FF:000001">
    <property type="entry name" value="Collagen IV alpha 1 chain"/>
    <property type="match status" value="1"/>
</dbReference>
<dbReference type="Gene3D" id="2.170.240.10">
    <property type="entry name" value="Collagen IV, non-collagenous"/>
    <property type="match status" value="1"/>
</dbReference>
<dbReference type="InterPro" id="IPR008160">
    <property type="entry name" value="Collagen"/>
</dbReference>
<dbReference type="InterPro" id="IPR001442">
    <property type="entry name" value="Collagen_IV_NC"/>
</dbReference>
<dbReference type="InterPro" id="IPR036954">
    <property type="entry name" value="Collagen_IV_NC_sf"/>
</dbReference>
<dbReference type="InterPro" id="IPR050938">
    <property type="entry name" value="Collagen_Structural_Proteins"/>
</dbReference>
<dbReference type="InterPro" id="IPR016187">
    <property type="entry name" value="CTDL_fold"/>
</dbReference>
<dbReference type="PANTHER" id="PTHR37456:SF6">
    <property type="entry name" value="COLLAGEN ALPHA-1(XXIII) CHAIN-LIKE ISOFORM X2"/>
    <property type="match status" value="1"/>
</dbReference>
<dbReference type="PANTHER" id="PTHR37456">
    <property type="entry name" value="SI:CH211-266K2.1"/>
    <property type="match status" value="1"/>
</dbReference>
<dbReference type="Pfam" id="PF01413">
    <property type="entry name" value="C4"/>
    <property type="match status" value="2"/>
</dbReference>
<dbReference type="Pfam" id="PF01391">
    <property type="entry name" value="Collagen"/>
    <property type="match status" value="18"/>
</dbReference>
<dbReference type="SMART" id="SM00111">
    <property type="entry name" value="C4"/>
    <property type="match status" value="2"/>
</dbReference>
<dbReference type="SUPFAM" id="SSF56436">
    <property type="entry name" value="C-type lectin-like"/>
    <property type="match status" value="2"/>
</dbReference>
<dbReference type="PROSITE" id="PS51403">
    <property type="entry name" value="NC1_IV"/>
    <property type="match status" value="1"/>
</dbReference>
<feature type="signal peptide" evidence="2">
    <location>
        <begin position="1"/>
        <end position="20"/>
    </location>
</feature>
<feature type="propeptide" id="PRO_0000005752" description="N-terminal propeptide (7S domain)">
    <location>
        <begin position="21"/>
        <end position="194" status="uncertain"/>
    </location>
</feature>
<feature type="chain" id="PRO_0000005753" description="Collagen alpha-1(IV) chain">
    <location>
        <begin position="195" status="uncertain"/>
        <end position="1759"/>
    </location>
</feature>
<feature type="domain" description="Collagen IV NC1" evidence="3">
    <location>
        <begin position="1535"/>
        <end position="1759"/>
    </location>
</feature>
<feature type="region of interest" description="Disordered" evidence="4">
    <location>
        <begin position="51"/>
        <end position="245"/>
    </location>
</feature>
<feature type="region of interest" description="Triple-helical region">
    <location>
        <begin position="195"/>
        <end position="1530"/>
    </location>
</feature>
<feature type="region of interest" description="Disordered" evidence="4">
    <location>
        <begin position="269"/>
        <end position="415"/>
    </location>
</feature>
<feature type="region of interest" description="Disordered" evidence="4">
    <location>
        <begin position="548"/>
        <end position="596"/>
    </location>
</feature>
<feature type="region of interest" description="Disordered" evidence="4">
    <location>
        <begin position="618"/>
        <end position="650"/>
    </location>
</feature>
<feature type="region of interest" description="Disordered" evidence="4">
    <location>
        <begin position="666"/>
        <end position="720"/>
    </location>
</feature>
<feature type="region of interest" description="Disordered" evidence="4">
    <location>
        <begin position="787"/>
        <end position="1522"/>
    </location>
</feature>
<feature type="compositionally biased region" description="Low complexity" evidence="4">
    <location>
        <begin position="104"/>
        <end position="116"/>
    </location>
</feature>
<feature type="compositionally biased region" description="Low complexity" evidence="4">
    <location>
        <begin position="140"/>
        <end position="153"/>
    </location>
</feature>
<feature type="compositionally biased region" description="Low complexity" evidence="4">
    <location>
        <begin position="278"/>
        <end position="293"/>
    </location>
</feature>
<feature type="compositionally biased region" description="Gly residues" evidence="4">
    <location>
        <begin position="324"/>
        <end position="345"/>
    </location>
</feature>
<feature type="compositionally biased region" description="Gly residues" evidence="4">
    <location>
        <begin position="360"/>
        <end position="370"/>
    </location>
</feature>
<feature type="compositionally biased region" description="Gly residues" evidence="4">
    <location>
        <begin position="379"/>
        <end position="388"/>
    </location>
</feature>
<feature type="compositionally biased region" description="Low complexity" evidence="4">
    <location>
        <begin position="399"/>
        <end position="411"/>
    </location>
</feature>
<feature type="compositionally biased region" description="Low complexity" evidence="4">
    <location>
        <begin position="574"/>
        <end position="595"/>
    </location>
</feature>
<feature type="compositionally biased region" description="Low complexity" evidence="4">
    <location>
        <begin position="833"/>
        <end position="848"/>
    </location>
</feature>
<feature type="compositionally biased region" description="Gly residues" evidence="4">
    <location>
        <begin position="904"/>
        <end position="913"/>
    </location>
</feature>
<feature type="compositionally biased region" description="Low complexity" evidence="4">
    <location>
        <begin position="1037"/>
        <end position="1047"/>
    </location>
</feature>
<feature type="compositionally biased region" description="Low complexity" evidence="4">
    <location>
        <begin position="1219"/>
        <end position="1232"/>
    </location>
</feature>
<feature type="compositionally biased region" description="Low complexity" evidence="4">
    <location>
        <begin position="1247"/>
        <end position="1271"/>
    </location>
</feature>
<feature type="compositionally biased region" description="Low complexity" evidence="4">
    <location>
        <begin position="1281"/>
        <end position="1309"/>
    </location>
</feature>
<feature type="compositionally biased region" description="Gly residues" evidence="4">
    <location>
        <begin position="1310"/>
        <end position="1319"/>
    </location>
</feature>
<feature type="compositionally biased region" description="Low complexity" evidence="4">
    <location>
        <begin position="1341"/>
        <end position="1357"/>
    </location>
</feature>
<feature type="compositionally biased region" description="Basic and acidic residues" evidence="4">
    <location>
        <begin position="1410"/>
        <end position="1422"/>
    </location>
</feature>
<feature type="compositionally biased region" description="Low complexity" evidence="4">
    <location>
        <begin position="1423"/>
        <end position="1437"/>
    </location>
</feature>
<feature type="compositionally biased region" description="Low complexity" evidence="4">
    <location>
        <begin position="1472"/>
        <end position="1482"/>
    </location>
</feature>
<feature type="compositionally biased region" description="Gly residues" evidence="4">
    <location>
        <begin position="1495"/>
        <end position="1504"/>
    </location>
</feature>
<feature type="disulfide bond" description="Or C-1550 with C-1638" evidence="3">
    <location>
        <begin position="1550"/>
        <end position="1641"/>
    </location>
</feature>
<feature type="disulfide bond" description="Or C-1583 with C-1641" evidence="3">
    <location>
        <begin position="1583"/>
        <end position="1638"/>
    </location>
</feature>
<feature type="disulfide bond" evidence="3">
    <location>
        <begin position="1595"/>
        <end position="1601"/>
    </location>
</feature>
<feature type="disulfide bond" description="Or C-1660 with C-1752" evidence="3">
    <location>
        <begin position="1660"/>
        <end position="1755"/>
    </location>
</feature>
<feature type="disulfide bond" description="Or C-1694 with C-1755" evidence="3">
    <location>
        <begin position="1694"/>
        <end position="1752"/>
    </location>
</feature>
<feature type="disulfide bond" evidence="3">
    <location>
        <begin position="1706"/>
        <end position="1712"/>
    </location>
</feature>
<feature type="cross-link" description="S-Lysyl-methionine sulfilimine (Met-Lys) (interchain with K-1741)" evidence="1">
    <location>
        <position position="1623"/>
    </location>
</feature>
<feature type="cross-link" description="S-Lysyl-methionine sulfilimine (Lys-Met) (interchain with M-1623)" evidence="1">
    <location>
        <position position="1741"/>
    </location>
</feature>
<feature type="splice variant" id="VSP_011573" description="In isoform b." evidence="9">
    <location>
        <begin position="502"/>
        <end position="758"/>
    </location>
</feature>
<feature type="mutagenesis site" description="In ju1197; suppresses the lethal phenotypes of the pxn-2 tm3464 mutant." evidence="8">
    <original>P</original>
    <variation>L</variation>
    <location>
        <position position="141"/>
    </location>
</feature>
<feature type="mutagenesis site" description="In b189; temperature-sensitive mutant. At the subrestrictive temperature of 22 degrees Celsius, causes the formation of ectopic presynaptic boutons on the ventral cord axons. Enhances the lethality of the pxn-2 ju436 mutant at 20 degrees Celsius." evidence="6 8">
    <original>G</original>
    <variation>E</variation>
    <location>
        <position position="213"/>
    </location>
</feature>
<feature type="mutagenesis site" description="In xd51; formation of ectopic presynaptic boutons on the ventral cord axons associated with a disruption of synapse basement membrane." evidence="6">
    <original>G</original>
    <variation>E</variation>
    <location>
        <position position="258"/>
    </location>
</feature>
<feature type="mutagenesis site" description="In allele g34; temperature-sensitive lethality during late embryogenesis." evidence="5">
    <original>G</original>
    <variation>E</variation>
    <location>
        <position position="403"/>
    </location>
</feature>
<feature type="mutagenesis site" description="In allele g23/hc70; temperature-sensitive lethality during late embryogenesis." evidence="5">
    <original>G</original>
    <variation>E</variation>
    <location>
        <position position="409"/>
    </location>
</feature>
<feature type="sequence conflict" description="In Ref. 1; CAA40299." evidence="9" ref="1">
    <original>AGQR</original>
    <variation>LDN</variation>
    <location>
        <begin position="302"/>
        <end position="305"/>
    </location>
</feature>
<feature type="sequence conflict" description="In Ref. 1; CAA40299." evidence="9" ref="1">
    <original>R</original>
    <variation>P</variation>
    <location>
        <position position="769"/>
    </location>
</feature>
<feature type="sequence conflict" description="In Ref. 1; CAA40299." evidence="9" ref="1">
    <original>V</original>
    <variation>D</variation>
    <location>
        <position position="831"/>
    </location>
</feature>
<feature type="sequence conflict" description="In Ref. 4; AAB59179." evidence="9" ref="4">
    <original>P</original>
    <variation>Q</variation>
    <location>
        <position position="1515"/>
    </location>
</feature>
<feature type="sequence conflict" description="In Ref. 1; CAA40299 and 4; AAB59179." evidence="9" ref="1 4">
    <original>L</original>
    <variation>P</variation>
    <location>
        <position position="1723"/>
    </location>
</feature>